<dbReference type="EC" id="2.7.7.85" evidence="1"/>
<dbReference type="EMBL" id="AE017333">
    <property type="protein sequence ID" value="AAU39080.1"/>
    <property type="molecule type" value="Genomic_DNA"/>
</dbReference>
<dbReference type="EMBL" id="CP000002">
    <property type="protein sequence ID" value="AAU21736.1"/>
    <property type="molecule type" value="Genomic_DNA"/>
</dbReference>
<dbReference type="RefSeq" id="WP_003178277.1">
    <property type="nucleotide sequence ID" value="NC_006322.1"/>
</dbReference>
<dbReference type="SMR" id="Q65PD4"/>
<dbReference type="STRING" id="279010.BL03263"/>
<dbReference type="GeneID" id="92858930"/>
<dbReference type="KEGG" id="bld:BLi00106"/>
<dbReference type="KEGG" id="bli:BL03263"/>
<dbReference type="eggNOG" id="COG1623">
    <property type="taxonomic scope" value="Bacteria"/>
</dbReference>
<dbReference type="HOGENOM" id="CLU_787128_0_0_9"/>
<dbReference type="Proteomes" id="UP000000606">
    <property type="component" value="Chromosome"/>
</dbReference>
<dbReference type="GO" id="GO:0004016">
    <property type="term" value="F:adenylate cyclase activity"/>
    <property type="evidence" value="ECO:0007669"/>
    <property type="project" value="TreeGrafter"/>
</dbReference>
<dbReference type="GO" id="GO:0005524">
    <property type="term" value="F:ATP binding"/>
    <property type="evidence" value="ECO:0007669"/>
    <property type="project" value="UniProtKB-UniRule"/>
</dbReference>
<dbReference type="GO" id="GO:0106408">
    <property type="term" value="F:diadenylate cyclase activity"/>
    <property type="evidence" value="ECO:0007669"/>
    <property type="project" value="UniProtKB-EC"/>
</dbReference>
<dbReference type="GO" id="GO:0003677">
    <property type="term" value="F:DNA binding"/>
    <property type="evidence" value="ECO:0007669"/>
    <property type="project" value="UniProtKB-UniRule"/>
</dbReference>
<dbReference type="GO" id="GO:0006281">
    <property type="term" value="P:DNA repair"/>
    <property type="evidence" value="ECO:0007669"/>
    <property type="project" value="UniProtKB-UniRule"/>
</dbReference>
<dbReference type="FunFam" id="3.40.1700.10:FF:000001">
    <property type="entry name" value="DNA integrity scanning protein DisA"/>
    <property type="match status" value="1"/>
</dbReference>
<dbReference type="Gene3D" id="1.10.150.20">
    <property type="entry name" value="5' to 3' exonuclease, C-terminal subdomain"/>
    <property type="match status" value="1"/>
</dbReference>
<dbReference type="Gene3D" id="1.20.1260.110">
    <property type="entry name" value="DNA integrity scanning linker region"/>
    <property type="match status" value="1"/>
</dbReference>
<dbReference type="Gene3D" id="3.40.1700.10">
    <property type="entry name" value="DNA integrity scanning protein, DisA, N-terminal domain"/>
    <property type="match status" value="1"/>
</dbReference>
<dbReference type="HAMAP" id="MF_01438">
    <property type="entry name" value="DisA"/>
    <property type="match status" value="1"/>
</dbReference>
<dbReference type="InterPro" id="IPR050338">
    <property type="entry name" value="DisA"/>
</dbReference>
<dbReference type="InterPro" id="IPR038331">
    <property type="entry name" value="DisA_sf"/>
</dbReference>
<dbReference type="InterPro" id="IPR036888">
    <property type="entry name" value="DNA_integrity_DisA_N_sf"/>
</dbReference>
<dbReference type="InterPro" id="IPR018906">
    <property type="entry name" value="DNA_integrity_scan_DisA_link"/>
</dbReference>
<dbReference type="InterPro" id="IPR003390">
    <property type="entry name" value="DNA_integrity_scan_DisA_N"/>
</dbReference>
<dbReference type="InterPro" id="IPR023763">
    <property type="entry name" value="DNA_integrity_scanning_protein"/>
</dbReference>
<dbReference type="InterPro" id="IPR010994">
    <property type="entry name" value="RuvA_2-like"/>
</dbReference>
<dbReference type="NCBIfam" id="NF010009">
    <property type="entry name" value="PRK13482.1"/>
    <property type="match status" value="1"/>
</dbReference>
<dbReference type="PANTHER" id="PTHR34185">
    <property type="entry name" value="DIADENYLATE CYCLASE"/>
    <property type="match status" value="1"/>
</dbReference>
<dbReference type="PANTHER" id="PTHR34185:SF3">
    <property type="entry name" value="DNA INTEGRITY SCANNING PROTEIN DISA"/>
    <property type="match status" value="1"/>
</dbReference>
<dbReference type="Pfam" id="PF02457">
    <property type="entry name" value="DAC"/>
    <property type="match status" value="1"/>
</dbReference>
<dbReference type="Pfam" id="PF10635">
    <property type="entry name" value="DisA-linker"/>
    <property type="match status" value="1"/>
</dbReference>
<dbReference type="SUPFAM" id="SSF47781">
    <property type="entry name" value="RuvA domain 2-like"/>
    <property type="match status" value="1"/>
</dbReference>
<dbReference type="SUPFAM" id="SSF143597">
    <property type="entry name" value="YojJ-like"/>
    <property type="match status" value="1"/>
</dbReference>
<dbReference type="PROSITE" id="PS51794">
    <property type="entry name" value="DAC"/>
    <property type="match status" value="1"/>
</dbReference>
<comment type="function">
    <text evidence="1">Participates in a DNA-damage check-point that is active prior to asymmetric division when DNA is damaged. DisA forms globular foci that rapidly scan along the chromosomes during sporulation, searching for lesions. When a lesion is present, DisA pauses at the lesion site. This triggers a cellular response that culminates in a temporary block in sporulation initiation.</text>
</comment>
<comment type="function">
    <text evidence="1">Also has diadenylate cyclase activity, catalyzing the condensation of 2 ATP molecules into cyclic di-AMP (c-di-AMP). c-di-AMP acts as a signaling molecule that couples DNA integrity with progression of sporulation. The rise in c-di-AMP level generated by DisA while scanning the chromosome, operates as a positive signal that advances sporulation; upon encountering a lesion, the DisA focus arrests at the damaged site and halts c-di-AMP synthesis.</text>
</comment>
<comment type="catalytic activity">
    <reaction evidence="1">
        <text>2 ATP = 3',3'-c-di-AMP + 2 diphosphate</text>
        <dbReference type="Rhea" id="RHEA:35655"/>
        <dbReference type="ChEBI" id="CHEBI:30616"/>
        <dbReference type="ChEBI" id="CHEBI:33019"/>
        <dbReference type="ChEBI" id="CHEBI:71500"/>
        <dbReference type="EC" id="2.7.7.85"/>
    </reaction>
</comment>
<comment type="cofactor">
    <cofactor evidence="1">
        <name>Mg(2+)</name>
        <dbReference type="ChEBI" id="CHEBI:18420"/>
    </cofactor>
</comment>
<comment type="subunit">
    <text evidence="1">Homooctamer.</text>
</comment>
<comment type="similarity">
    <text evidence="1">Belongs to the DisA family.</text>
</comment>
<protein>
    <recommendedName>
        <fullName evidence="1">DNA integrity scanning protein DisA</fullName>
    </recommendedName>
    <alternativeName>
        <fullName evidence="1">Cyclic di-AMP synthase</fullName>
        <shortName evidence="1">c-di-AMP synthase</shortName>
    </alternativeName>
    <alternativeName>
        <fullName evidence="1">Diadenylate cyclase</fullName>
        <ecNumber evidence="1">2.7.7.85</ecNumber>
    </alternativeName>
</protein>
<reference key="1">
    <citation type="journal article" date="2004" name="J. Mol. Microbiol. Biotechnol.">
        <title>The complete genome sequence of Bacillus licheniformis DSM13, an organism with great industrial potential.</title>
        <authorList>
            <person name="Veith B."/>
            <person name="Herzberg C."/>
            <person name="Steckel S."/>
            <person name="Feesche J."/>
            <person name="Maurer K.H."/>
            <person name="Ehrenreich P."/>
            <person name="Baeumer S."/>
            <person name="Henne A."/>
            <person name="Liesegang H."/>
            <person name="Merkl R."/>
            <person name="Ehrenreich A."/>
            <person name="Gottschalk G."/>
        </authorList>
    </citation>
    <scope>NUCLEOTIDE SEQUENCE [LARGE SCALE GENOMIC DNA]</scope>
    <source>
        <strain>ATCC 14580 / DSM 13 / JCM 2505 / CCUG 7422 / NBRC 12200 / NCIMB 9375 / NCTC 10341 / NRRL NRS-1264 / Gibson 46</strain>
    </source>
</reference>
<reference key="2">
    <citation type="journal article" date="2004" name="Genome Biol.">
        <title>Complete genome sequence of the industrial bacterium Bacillus licheniformis and comparisons with closely related Bacillus species.</title>
        <authorList>
            <person name="Rey M.W."/>
            <person name="Ramaiya P."/>
            <person name="Nelson B.A."/>
            <person name="Brody-Karpin S.D."/>
            <person name="Zaretsky E.J."/>
            <person name="Tang M."/>
            <person name="Lopez de Leon A."/>
            <person name="Xiang H."/>
            <person name="Gusti V."/>
            <person name="Clausen I.G."/>
            <person name="Olsen P.B."/>
            <person name="Rasmussen M.D."/>
            <person name="Andersen J.T."/>
            <person name="Joergensen P.L."/>
            <person name="Larsen T.S."/>
            <person name="Sorokin A."/>
            <person name="Bolotin A."/>
            <person name="Lapidus A."/>
            <person name="Galleron N."/>
            <person name="Ehrlich S.D."/>
            <person name="Berka R.M."/>
        </authorList>
    </citation>
    <scope>NUCLEOTIDE SEQUENCE [LARGE SCALE GENOMIC DNA]</scope>
    <source>
        <strain>ATCC 14580 / DSM 13 / JCM 2505 / CCUG 7422 / NBRC 12200 / NCIMB 9375 / NCTC 10341 / NRRL NRS-1264 / Gibson 46</strain>
    </source>
</reference>
<sequence length="358" mass="40582">MDKDKKGAKQDLSEILQFVAPGTPLREGIENVLRAKTGGLIVVGFNDKVKEVVDGGFHINSSFSPAHLYELAKMDGAIILSDSGQKILYANTQLMPEATIPSSETGMRHRTAERVAKQTGCLIIAISERRNVITLYQENMKYILKDIGFILTKANQAIQTLEKYKLILDHAISNLNALEFEELVTFGDVISVLHRYEMVLRIKNEINMYIKELGTEGHLIRLQVSELITDMEQEAALFVKDYVKEKIKDPFVLLKQLQDMSSFELLDDAILLKLLGYSATTNMEEYVFPRGYRLLHKIPRLPMPIVENVVEAFGHLKLIIEADVKDLDEVEGIGAVRAQKIKKGLKRLQEKHYTDRQL</sequence>
<name>DISA_BACLD</name>
<evidence type="ECO:0000255" key="1">
    <source>
        <dbReference type="HAMAP-Rule" id="MF_01438"/>
    </source>
</evidence>
<evidence type="ECO:0000255" key="2">
    <source>
        <dbReference type="PROSITE-ProRule" id="PRU01130"/>
    </source>
</evidence>
<accession>Q65PD4</accession>
<accession>Q62ZS2</accession>
<gene>
    <name evidence="1" type="primary">disA</name>
    <name type="ordered locus">BLi00106</name>
    <name type="ordered locus">BL03263</name>
</gene>
<organism>
    <name type="scientific">Bacillus licheniformis (strain ATCC 14580 / DSM 13 / JCM 2505 / CCUG 7422 / NBRC 12200 / NCIMB 9375 / NCTC 10341 / NRRL NRS-1264 / Gibson 46)</name>
    <dbReference type="NCBI Taxonomy" id="279010"/>
    <lineage>
        <taxon>Bacteria</taxon>
        <taxon>Bacillati</taxon>
        <taxon>Bacillota</taxon>
        <taxon>Bacilli</taxon>
        <taxon>Bacillales</taxon>
        <taxon>Bacillaceae</taxon>
        <taxon>Bacillus</taxon>
    </lineage>
</organism>
<proteinExistence type="inferred from homology"/>
<feature type="chain" id="PRO_0000255637" description="DNA integrity scanning protein DisA">
    <location>
        <begin position="1"/>
        <end position="358"/>
    </location>
</feature>
<feature type="domain" description="DAC" evidence="2">
    <location>
        <begin position="9"/>
        <end position="147"/>
    </location>
</feature>
<feature type="binding site" evidence="1">
    <location>
        <position position="76"/>
    </location>
    <ligand>
        <name>ATP</name>
        <dbReference type="ChEBI" id="CHEBI:30616"/>
    </ligand>
</feature>
<feature type="binding site" evidence="1">
    <location>
        <position position="94"/>
    </location>
    <ligand>
        <name>ATP</name>
        <dbReference type="ChEBI" id="CHEBI:30616"/>
    </ligand>
</feature>
<feature type="binding site" evidence="1">
    <location>
        <begin position="107"/>
        <end position="111"/>
    </location>
    <ligand>
        <name>ATP</name>
        <dbReference type="ChEBI" id="CHEBI:30616"/>
    </ligand>
</feature>
<keyword id="KW-0067">ATP-binding</keyword>
<keyword id="KW-0227">DNA damage</keyword>
<keyword id="KW-0234">DNA repair</keyword>
<keyword id="KW-0238">DNA-binding</keyword>
<keyword id="KW-0460">Magnesium</keyword>
<keyword id="KW-0547">Nucleotide-binding</keyword>
<keyword id="KW-0548">Nucleotidyltransferase</keyword>
<keyword id="KW-1185">Reference proteome</keyword>
<keyword id="KW-0808">Transferase</keyword>